<keyword id="KW-0025">Alternative splicing</keyword>
<keyword id="KW-0053">Apoptosis</keyword>
<keyword id="KW-0963">Cytoplasm</keyword>
<keyword id="KW-0217">Developmental protein</keyword>
<keyword id="KW-0479">Metal-binding</keyword>
<keyword id="KW-0539">Nucleus</keyword>
<keyword id="KW-0646">Protease inhibitor</keyword>
<keyword id="KW-1185">Reference proteome</keyword>
<keyword id="KW-0677">Repeat</keyword>
<keyword id="KW-0789">Thiol protease inhibitor</keyword>
<keyword id="KW-0808">Transferase</keyword>
<keyword id="KW-0833">Ubl conjugation pathway</keyword>
<keyword id="KW-0879">Wnt signaling pathway</keyword>
<keyword id="KW-0862">Zinc</keyword>
<keyword id="KW-0863">Zinc-finger</keyword>
<gene>
    <name type="primary">xiap</name>
    <name evidence="3" type="synonym">birc4</name>
</gene>
<organism>
    <name type="scientific">Xenopus laevis</name>
    <name type="common">African clawed frog</name>
    <dbReference type="NCBI Taxonomy" id="8355"/>
    <lineage>
        <taxon>Eukaryota</taxon>
        <taxon>Metazoa</taxon>
        <taxon>Chordata</taxon>
        <taxon>Craniata</taxon>
        <taxon>Vertebrata</taxon>
        <taxon>Euteleostomi</taxon>
        <taxon>Amphibia</taxon>
        <taxon>Batrachia</taxon>
        <taxon>Anura</taxon>
        <taxon>Pipoidea</taxon>
        <taxon>Pipidae</taxon>
        <taxon>Xenopodinae</taxon>
        <taxon>Xenopus</taxon>
        <taxon>Xenopus</taxon>
    </lineage>
</organism>
<reference key="1">
    <citation type="journal article" date="2005" name="FEBS J.">
        <title>Apoptosis-inhibiting activities of BIR family proteins in Xenopus egg extracts.</title>
        <authorList>
            <person name="Tsuchiya Y."/>
            <person name="Murai S."/>
            <person name="Yamashita S."/>
        </authorList>
    </citation>
    <scope>NUCLEOTIDE SEQUENCE [MRNA] (ISOFORM 2)</scope>
    <scope>FUNCTION</scope>
    <scope>DEVELOPMENTAL STAGE</scope>
    <scope>DOMAIN FUNCTION</scope>
    <scope>PROTEIN DEGRADATION</scope>
</reference>
<reference key="2">
    <citation type="submission" date="2007-05" db="EMBL/GenBank/DDBJ databases">
        <authorList>
            <consortium name="NIH - Xenopus Gene Collection (XGC) project"/>
        </authorList>
    </citation>
    <scope>NUCLEOTIDE SEQUENCE [LARGE SCALE MRNA] (ISOFORM 1)</scope>
    <source>
        <tissue evidence="11">Fat body</tissue>
    </source>
</reference>
<reference key="3">
    <citation type="journal article" date="2012" name="Mol. Cell">
        <title>XIAP monoubiquitylates Groucho/TLE to promote canonical Wnt signaling.</title>
        <authorList>
            <person name="Hanson A.J."/>
            <person name="Wallace H.A."/>
            <person name="Freeman T.J."/>
            <person name="Beauchamp R.D."/>
            <person name="Lee L.A."/>
            <person name="Lee E."/>
        </authorList>
    </citation>
    <scope>FUNCTION</scope>
</reference>
<protein>
    <recommendedName>
        <fullName evidence="2">E3 ubiquitin-protein ligase XIAP</fullName>
        <ecNumber evidence="2">2.3.2.27</ecNumber>
    </recommendedName>
    <alternativeName>
        <fullName evidence="2">Baculoviral IAP repeat-containing protein 4</fullName>
    </alternativeName>
    <alternativeName>
        <fullName>RING-type E3 ubiquitin transferase XIAP</fullName>
    </alternativeName>
    <alternativeName>
        <fullName evidence="9">X-linked inhibitor of apoptosis protein</fullName>
        <shortName evidence="9">X-linked IAP</shortName>
        <shortName evidence="9">xXIAP</shortName>
    </alternativeName>
</protein>
<feature type="chain" id="PRO_0000379957" description="E3 ubiquitin-protein ligase XIAP">
    <location>
        <begin position="1"/>
        <end position="488"/>
    </location>
</feature>
<feature type="repeat" description="BIR 1" evidence="4">
    <location>
        <begin position="40"/>
        <end position="105"/>
    </location>
</feature>
<feature type="repeat" description="BIR 2" evidence="4">
    <location>
        <begin position="176"/>
        <end position="241"/>
    </location>
</feature>
<feature type="repeat" description="BIR 3" evidence="4">
    <location>
        <begin position="266"/>
        <end position="329"/>
    </location>
</feature>
<feature type="zinc finger region" description="RING-type" evidence="6">
    <location>
        <begin position="441"/>
        <end position="476"/>
    </location>
</feature>
<feature type="binding site" evidence="1 5">
    <location>
        <position position="298"/>
    </location>
    <ligand>
        <name>Zn(2+)</name>
        <dbReference type="ChEBI" id="CHEBI:29105"/>
    </ligand>
</feature>
<feature type="binding site" evidence="1 5">
    <location>
        <position position="301"/>
    </location>
    <ligand>
        <name>Zn(2+)</name>
        <dbReference type="ChEBI" id="CHEBI:29105"/>
    </ligand>
</feature>
<feature type="binding site" evidence="1 5">
    <location>
        <position position="318"/>
    </location>
    <ligand>
        <name>Zn(2+)</name>
        <dbReference type="ChEBI" id="CHEBI:29105"/>
    </ligand>
</feature>
<feature type="binding site" evidence="1 5">
    <location>
        <position position="325"/>
    </location>
    <ligand>
        <name>Zn(2+)</name>
        <dbReference type="ChEBI" id="CHEBI:29105"/>
    </ligand>
</feature>
<feature type="splice variant" id="VSP_053138" description="In isoform 2." evidence="9">
    <location>
        <begin position="1"/>
        <end position="13"/>
    </location>
</feature>
<feature type="splice variant" id="VSP_053139" description="In isoform 2." evidence="9">
    <location>
        <begin position="362"/>
        <end position="424"/>
    </location>
</feature>
<feature type="sequence conflict" description="In Ref. 1; BAD98268." evidence="10" ref="1">
    <original>K</original>
    <variation>Q</variation>
    <location>
        <position position="231"/>
    </location>
</feature>
<name>XIAP_XENLA</name>
<proteinExistence type="evidence at transcript level"/>
<comment type="function">
    <text evidence="2 7 8">Multi-functional protein which regulates not only caspases and apoptosis, but also acts as an E3 ubiquitin-protein ligase mediating ubiquitination and subsequent proteasomal degradation of its target proteins (By similarity). Acts as a direct caspase inhibitor (By similarity). E3 ubiquitin-protein ligase that acts as an important regulator of innate immunity by mediating 'Lys-63'-linked polyubiquitination of ripk2 downstream of NOD1 and NOD2, thereby transforming ripk2 into a scaffolding protein for downstream effectors, ultimately leading to activation of the NF-kappa-B and MAP kinases signaling (By similarity). A key apoptotic suppressor in eggs (PubMed:15853809). Acts as a positive regulator of Wnt signaling (PubMed:22304967).</text>
</comment>
<comment type="catalytic activity">
    <reaction evidence="2">
        <text>S-ubiquitinyl-[E2 ubiquitin-conjugating enzyme]-L-cysteine + [acceptor protein]-L-lysine = [E2 ubiquitin-conjugating enzyme]-L-cysteine + N(6)-ubiquitinyl-[acceptor protein]-L-lysine.</text>
        <dbReference type="EC" id="2.3.2.27"/>
    </reaction>
</comment>
<comment type="subunit">
    <text evidence="2">Monomer, and homodimer.</text>
</comment>
<comment type="subcellular location">
    <subcellularLocation>
        <location evidence="2">Cytoplasm</location>
    </subcellularLocation>
    <subcellularLocation>
        <location evidence="2">Nucleus</location>
    </subcellularLocation>
</comment>
<comment type="alternative products">
    <event type="alternative splicing"/>
    <isoform>
        <id>A5D8Q0-1</id>
        <name>1</name>
        <sequence type="displayed"/>
    </isoform>
    <isoform>
        <id>A5D8Q0-2</id>
        <name evidence="7">2</name>
        <sequence type="described" ref="VSP_053138 VSP_053139"/>
    </isoform>
</comment>
<comment type="developmental stage">
    <text evidence="7">Expressed maternally.</text>
</comment>
<comment type="domain">
    <text evidence="7">The BIR and RING-type domains are dispensable for anti-apoptotic function.</text>
</comment>
<comment type="PTM">
    <text evidence="7">Degraded in a 2-step mechanism; a caspase-independent first step and a caspase-dependent second step (PubMed:15853809). Stabilized indirectly by MAPK, which acts to delay caspase activation, rather than directly phosphorylating xiap (PubMed:15853809).</text>
</comment>
<comment type="similarity">
    <text evidence="4">Belongs to the IAP family.</text>
</comment>
<comment type="sequence caution" evidence="10">
    <conflict type="erroneous initiation">
        <sequence resource="EMBL-CDS" id="AAI41766"/>
    </conflict>
</comment>
<dbReference type="EC" id="2.3.2.27" evidence="2"/>
<dbReference type="EMBL" id="AB197252">
    <property type="protein sequence ID" value="BAD98268.1"/>
    <property type="molecule type" value="mRNA"/>
</dbReference>
<dbReference type="EMBL" id="BC141765">
    <property type="protein sequence ID" value="AAI41766.1"/>
    <property type="status" value="ALT_INIT"/>
    <property type="molecule type" value="mRNA"/>
</dbReference>
<dbReference type="RefSeq" id="NP_001089083.1">
    <property type="nucleotide sequence ID" value="NM_001095614.1"/>
</dbReference>
<dbReference type="SMR" id="A5D8Q0"/>
<dbReference type="DNASU" id="733235"/>
<dbReference type="GeneID" id="733235"/>
<dbReference type="KEGG" id="xla:733235"/>
<dbReference type="AGR" id="Xenbase:XB-GENE-948852"/>
<dbReference type="CTD" id="733235"/>
<dbReference type="Xenbase" id="XB-GENE-948852">
    <property type="gene designation" value="xiap.L"/>
</dbReference>
<dbReference type="OrthoDB" id="5855668at2759"/>
<dbReference type="Proteomes" id="UP000186698">
    <property type="component" value="Chromosome 8L"/>
</dbReference>
<dbReference type="Bgee" id="733235">
    <property type="expression patterns" value="Expressed in blastula and 19 other cell types or tissues"/>
</dbReference>
<dbReference type="GO" id="GO:0005737">
    <property type="term" value="C:cytoplasm"/>
    <property type="evidence" value="ECO:0000250"/>
    <property type="project" value="UniProtKB"/>
</dbReference>
<dbReference type="GO" id="GO:0005634">
    <property type="term" value="C:nucleus"/>
    <property type="evidence" value="ECO:0000318"/>
    <property type="project" value="GO_Central"/>
</dbReference>
<dbReference type="GO" id="GO:0004869">
    <property type="term" value="F:cysteine-type endopeptidase inhibitor activity"/>
    <property type="evidence" value="ECO:0007669"/>
    <property type="project" value="UniProtKB-KW"/>
</dbReference>
<dbReference type="GO" id="GO:0043027">
    <property type="term" value="F:cysteine-type endopeptidase inhibitor activity involved in apoptotic process"/>
    <property type="evidence" value="ECO:0000315"/>
    <property type="project" value="UniProtKB"/>
</dbReference>
<dbReference type="GO" id="GO:0061630">
    <property type="term" value="F:ubiquitin protein ligase activity"/>
    <property type="evidence" value="ECO:0000318"/>
    <property type="project" value="GO_Central"/>
</dbReference>
<dbReference type="GO" id="GO:0004842">
    <property type="term" value="F:ubiquitin-protein transferase activity"/>
    <property type="evidence" value="ECO:0000250"/>
    <property type="project" value="UniProtKB"/>
</dbReference>
<dbReference type="GO" id="GO:0008270">
    <property type="term" value="F:zinc ion binding"/>
    <property type="evidence" value="ECO:0007669"/>
    <property type="project" value="UniProtKB-KW"/>
</dbReference>
<dbReference type="GO" id="GO:0006915">
    <property type="term" value="P:apoptotic process"/>
    <property type="evidence" value="ECO:0007669"/>
    <property type="project" value="UniProtKB-KW"/>
</dbReference>
<dbReference type="GO" id="GO:0043066">
    <property type="term" value="P:negative regulation of apoptotic process"/>
    <property type="evidence" value="ECO:0000314"/>
    <property type="project" value="UniProtKB"/>
</dbReference>
<dbReference type="GO" id="GO:0045861">
    <property type="term" value="P:negative regulation of proteolysis"/>
    <property type="evidence" value="ECO:0000315"/>
    <property type="project" value="UniProtKB"/>
</dbReference>
<dbReference type="GO" id="GO:0070431">
    <property type="term" value="P:nucleotide-binding oligomerization domain containing 2 signaling pathway"/>
    <property type="evidence" value="ECO:0000250"/>
    <property type="project" value="UniProtKB"/>
</dbReference>
<dbReference type="GO" id="GO:0043123">
    <property type="term" value="P:positive regulation of canonical NF-kappaB signal transduction"/>
    <property type="evidence" value="ECO:0000250"/>
    <property type="project" value="UniProtKB"/>
</dbReference>
<dbReference type="GO" id="GO:0090263">
    <property type="term" value="P:positive regulation of canonical Wnt signaling pathway"/>
    <property type="evidence" value="ECO:0000315"/>
    <property type="project" value="UniProtKB"/>
</dbReference>
<dbReference type="GO" id="GO:1902530">
    <property type="term" value="P:positive regulation of protein linear polyubiquitination"/>
    <property type="evidence" value="ECO:0000250"/>
    <property type="project" value="UniProtKB"/>
</dbReference>
<dbReference type="GO" id="GO:0031398">
    <property type="term" value="P:positive regulation of protein ubiquitination"/>
    <property type="evidence" value="ECO:0000318"/>
    <property type="project" value="GO_Central"/>
</dbReference>
<dbReference type="GO" id="GO:0051726">
    <property type="term" value="P:regulation of cell cycle"/>
    <property type="evidence" value="ECO:0000318"/>
    <property type="project" value="GO_Central"/>
</dbReference>
<dbReference type="GO" id="GO:0016055">
    <property type="term" value="P:Wnt signaling pathway"/>
    <property type="evidence" value="ECO:0007669"/>
    <property type="project" value="UniProtKB-KW"/>
</dbReference>
<dbReference type="CDD" id="cd00022">
    <property type="entry name" value="BIR"/>
    <property type="match status" value="3"/>
</dbReference>
<dbReference type="CDD" id="cd16714">
    <property type="entry name" value="RING-HC_BIRC4_8"/>
    <property type="match status" value="1"/>
</dbReference>
<dbReference type="CDD" id="cd14395">
    <property type="entry name" value="UBA_BIRC4_8"/>
    <property type="match status" value="1"/>
</dbReference>
<dbReference type="FunFam" id="3.30.40.10:FF:000184">
    <property type="entry name" value="Baculoviral IAP repeat containing 2"/>
    <property type="match status" value="1"/>
</dbReference>
<dbReference type="FunFam" id="1.10.1170.10:FF:000002">
    <property type="entry name" value="Baculoviral IAP repeat containing 7"/>
    <property type="match status" value="1"/>
</dbReference>
<dbReference type="FunFam" id="1.10.1170.10:FF:000003">
    <property type="entry name" value="E3 ubiquitin-protein ligase XIAP"/>
    <property type="match status" value="1"/>
</dbReference>
<dbReference type="FunFam" id="1.10.1170.10:FF:000011">
    <property type="entry name" value="E3 ubiquitin-protein ligase XIAP"/>
    <property type="match status" value="1"/>
</dbReference>
<dbReference type="FunFam" id="1.10.8.10:FF:000084">
    <property type="entry name" value="E3 ubiquitin-protein ligase XIAP"/>
    <property type="match status" value="1"/>
</dbReference>
<dbReference type="FunFam" id="1.10.1170.10:FF:000008">
    <property type="entry name" value="Putative e3 ubiquitin-protein ligase xiap"/>
    <property type="match status" value="1"/>
</dbReference>
<dbReference type="Gene3D" id="1.10.8.10">
    <property type="entry name" value="DNA helicase RuvA subunit, C-terminal domain"/>
    <property type="match status" value="1"/>
</dbReference>
<dbReference type="Gene3D" id="1.10.1170.10">
    <property type="entry name" value="Inhibitor Of Apoptosis Protein (2mihbC-IAP-1), Chain A"/>
    <property type="match status" value="3"/>
</dbReference>
<dbReference type="Gene3D" id="3.30.40.10">
    <property type="entry name" value="Zinc/RING finger domain, C3HC4 (zinc finger)"/>
    <property type="match status" value="1"/>
</dbReference>
<dbReference type="InterPro" id="IPR001370">
    <property type="entry name" value="BIR_rpt"/>
</dbReference>
<dbReference type="InterPro" id="IPR048875">
    <property type="entry name" value="BIRC2-3-like_UBA"/>
</dbReference>
<dbReference type="InterPro" id="IPR050784">
    <property type="entry name" value="IAP"/>
</dbReference>
<dbReference type="InterPro" id="IPR042579">
    <property type="entry name" value="XIAP/BIRC8_UBA"/>
</dbReference>
<dbReference type="InterPro" id="IPR001841">
    <property type="entry name" value="Znf_RING"/>
</dbReference>
<dbReference type="InterPro" id="IPR013083">
    <property type="entry name" value="Znf_RING/FYVE/PHD"/>
</dbReference>
<dbReference type="PANTHER" id="PTHR10044:SF115">
    <property type="entry name" value="E3 UBIQUITIN-PROTEIN LIGASE XIAP"/>
    <property type="match status" value="1"/>
</dbReference>
<dbReference type="PANTHER" id="PTHR10044">
    <property type="entry name" value="INHIBITOR OF APOPTOSIS"/>
    <property type="match status" value="1"/>
</dbReference>
<dbReference type="Pfam" id="PF00653">
    <property type="entry name" value="BIR"/>
    <property type="match status" value="3"/>
</dbReference>
<dbReference type="Pfam" id="PF21290">
    <property type="entry name" value="UBA_BIRC2-3"/>
    <property type="match status" value="1"/>
</dbReference>
<dbReference type="Pfam" id="PF13920">
    <property type="entry name" value="zf-C3HC4_3"/>
    <property type="match status" value="1"/>
</dbReference>
<dbReference type="SMART" id="SM00238">
    <property type="entry name" value="BIR"/>
    <property type="match status" value="3"/>
</dbReference>
<dbReference type="SMART" id="SM00184">
    <property type="entry name" value="RING"/>
    <property type="match status" value="1"/>
</dbReference>
<dbReference type="SUPFAM" id="SSF57924">
    <property type="entry name" value="Inhibitor of apoptosis (IAP) repeat"/>
    <property type="match status" value="3"/>
</dbReference>
<dbReference type="PROSITE" id="PS01282">
    <property type="entry name" value="BIR_REPEAT_1"/>
    <property type="match status" value="2"/>
</dbReference>
<dbReference type="PROSITE" id="PS50143">
    <property type="entry name" value="BIR_REPEAT_2"/>
    <property type="match status" value="3"/>
</dbReference>
<dbReference type="PROSITE" id="PS50089">
    <property type="entry name" value="ZF_RING_2"/>
    <property type="match status" value="1"/>
</dbReference>
<sequence>MEPQIVKFVFKEEMTCQCPKMSDSACDVDTDQNYFEEEVRLASFANFSSSYPVSAPALARAGFYYTGDGDRVKCFSCMAMVEDWQHGDTAIGKHRKISPNCKFINGFNNFRSDCIQTQAPVMQNSHANGFPNSAEDPGEKSSSEIMADYMLRTGRVVDMSKPKYPRHMAMCSEEARLQTFQNWPGYSPLMPKELANAGLFYTGINDQVKCFCCGGKLMNWEPSDRAWTEHKKHFPECYFVLGRDVGNVTRDASVQGSTYMNSYNARLETFSSWPFPIDKETLAKAGFYRIGDEDATKCFSCGGMLNCWAANDDPWEEHAKAYPGCQFLIEEKGQQFINNAQLQRPILHKANSGEASPALPKDTSFLKNPLVIYAQQMGFPLEEIKKVMGQKLKTTGNNYTCVEEFVSDLLCAQSETIADKPMKREISIEEKLRQLEEEKVCKVCMDRRITIVFIPCGHLVACAVCADVLDKCPICCTIIERRQKIFMS</sequence>
<evidence type="ECO:0000250" key="1">
    <source>
        <dbReference type="UniProtKB" id="O15392"/>
    </source>
</evidence>
<evidence type="ECO:0000250" key="2">
    <source>
        <dbReference type="UniProtKB" id="P98170"/>
    </source>
</evidence>
<evidence type="ECO:0000250" key="3">
    <source>
        <dbReference type="UniProtKB" id="Q5BKL8"/>
    </source>
</evidence>
<evidence type="ECO:0000255" key="4"/>
<evidence type="ECO:0000255" key="5">
    <source>
        <dbReference type="PROSITE-ProRule" id="PRU00029"/>
    </source>
</evidence>
<evidence type="ECO:0000255" key="6">
    <source>
        <dbReference type="PROSITE-ProRule" id="PRU00175"/>
    </source>
</evidence>
<evidence type="ECO:0000269" key="7">
    <source>
    </source>
</evidence>
<evidence type="ECO:0000269" key="8">
    <source>
    </source>
</evidence>
<evidence type="ECO:0000303" key="9">
    <source>
    </source>
</evidence>
<evidence type="ECO:0000305" key="10"/>
<evidence type="ECO:0000312" key="11">
    <source>
        <dbReference type="EMBL" id="AAI41766.1"/>
    </source>
</evidence>
<accession>A5D8Q0</accession>
<accession>Q50L37</accession>